<feature type="chain" id="PRO_0000224755" description="Elongation factor 4">
    <location>
        <begin position="1"/>
        <end position="596"/>
    </location>
</feature>
<feature type="domain" description="tr-type G">
    <location>
        <begin position="2"/>
        <end position="184"/>
    </location>
</feature>
<feature type="binding site" evidence="1">
    <location>
        <begin position="14"/>
        <end position="19"/>
    </location>
    <ligand>
        <name>GTP</name>
        <dbReference type="ChEBI" id="CHEBI:37565"/>
    </ligand>
</feature>
<feature type="binding site" evidence="1">
    <location>
        <begin position="131"/>
        <end position="134"/>
    </location>
    <ligand>
        <name>GTP</name>
        <dbReference type="ChEBI" id="CHEBI:37565"/>
    </ligand>
</feature>
<comment type="function">
    <text evidence="1">Required for accurate and efficient protein synthesis under certain stress conditions. May act as a fidelity factor of the translation reaction, by catalyzing a one-codon backward translocation of tRNAs on improperly translocated ribosomes. Back-translocation proceeds from a post-translocation (POST) complex to a pre-translocation (PRE) complex, thus giving elongation factor G a second chance to translocate the tRNAs correctly. Binds to ribosomes in a GTP-dependent manner.</text>
</comment>
<comment type="catalytic activity">
    <reaction evidence="1">
        <text>GTP + H2O = GDP + phosphate + H(+)</text>
        <dbReference type="Rhea" id="RHEA:19669"/>
        <dbReference type="ChEBI" id="CHEBI:15377"/>
        <dbReference type="ChEBI" id="CHEBI:15378"/>
        <dbReference type="ChEBI" id="CHEBI:37565"/>
        <dbReference type="ChEBI" id="CHEBI:43474"/>
        <dbReference type="ChEBI" id="CHEBI:58189"/>
        <dbReference type="EC" id="3.6.5.n1"/>
    </reaction>
</comment>
<comment type="subcellular location">
    <subcellularLocation>
        <location evidence="1">Cell inner membrane</location>
        <topology evidence="1">Peripheral membrane protein</topology>
        <orientation evidence="1">Cytoplasmic side</orientation>
    </subcellularLocation>
</comment>
<comment type="similarity">
    <text evidence="1">Belongs to the TRAFAC class translation factor GTPase superfamily. Classic translation factor GTPase family. LepA subfamily.</text>
</comment>
<organism>
    <name type="scientific">Dechloromonas aromatica (strain RCB)</name>
    <dbReference type="NCBI Taxonomy" id="159087"/>
    <lineage>
        <taxon>Bacteria</taxon>
        <taxon>Pseudomonadati</taxon>
        <taxon>Pseudomonadota</taxon>
        <taxon>Betaproteobacteria</taxon>
        <taxon>Rhodocyclales</taxon>
        <taxon>Azonexaceae</taxon>
        <taxon>Dechloromonas</taxon>
    </lineage>
</organism>
<reference key="1">
    <citation type="journal article" date="2009" name="BMC Genomics">
        <title>Metabolic analysis of the soil microbe Dechloromonas aromatica str. RCB: indications of a surprisingly complex life-style and cryptic anaerobic pathways for aromatic degradation.</title>
        <authorList>
            <person name="Salinero K.K."/>
            <person name="Keller K."/>
            <person name="Feil W.S."/>
            <person name="Feil H."/>
            <person name="Trong S."/>
            <person name="Di Bartolo G."/>
            <person name="Lapidus A."/>
        </authorList>
    </citation>
    <scope>NUCLEOTIDE SEQUENCE [LARGE SCALE GENOMIC DNA]</scope>
    <source>
        <strain>RCB</strain>
    </source>
</reference>
<protein>
    <recommendedName>
        <fullName evidence="1">Elongation factor 4</fullName>
        <shortName evidence="1">EF-4</shortName>
        <ecNumber evidence="1">3.6.5.n1</ecNumber>
    </recommendedName>
    <alternativeName>
        <fullName evidence="1">Ribosomal back-translocase LepA</fullName>
    </alternativeName>
</protein>
<gene>
    <name evidence="1" type="primary">lepA</name>
    <name type="ordered locus">Daro_2026</name>
</gene>
<name>LEPA_DECAR</name>
<proteinExistence type="inferred from homology"/>
<evidence type="ECO:0000255" key="1">
    <source>
        <dbReference type="HAMAP-Rule" id="MF_00071"/>
    </source>
</evidence>
<sequence length="596" mass="66232">MDHIRNFSIIAHIDHGKSTLADRIIHLCGGLSDREMEAQVLDSMDIERERGITIKAQTAALSYKARDGKVYNLNLIDTPGHVDFSYEVSRSLSACEGALLVVDASQGVEAQTVANCYTALELDVEVVPVLNKIDLPSADPENARQEIEDVIGIDASEAVLASAKTGLGVEDILEAVVARIPPPKGNPDAPLKALIIDSWFDNYVGVVMLVRVVDGVIKPKDKLLFMATEAEQLCEQVGVFAPKSEKRDMLRAGEVGFVISGIKELKAAKVGDTITTMDRKATEALPGFKEIKPQVFAGLYPVESNQYDSLRESLEKLKLNDASLQYEPEVSQALGFGFRCGFLGLLHMEIVQERLEREFDQDLITTAPTVVYQVVMRDGSIIEVENPAKLPDVTKMEEVREPIITATIFVPQDYLGNVITLCNQKRGNQVDMHYHGRQVKLVYEMPMAEVVMDFFDKLKSCSKGYASLDYDFKEYRAADVVKLDILINSEKVDALSLIVHRANAQYRGRELASKMRELIPRQMYDVAIQAAIGSHIISRENVKAMRKDVLAKCYGGDISRKKKLLEKQKAGKKRMKQVGSVEIPQEAFLAVLRVDN</sequence>
<accession>Q47EG0</accession>
<keyword id="KW-0997">Cell inner membrane</keyword>
<keyword id="KW-1003">Cell membrane</keyword>
<keyword id="KW-0342">GTP-binding</keyword>
<keyword id="KW-0378">Hydrolase</keyword>
<keyword id="KW-0472">Membrane</keyword>
<keyword id="KW-0547">Nucleotide-binding</keyword>
<keyword id="KW-0648">Protein biosynthesis</keyword>
<dbReference type="EC" id="3.6.5.n1" evidence="1"/>
<dbReference type="EMBL" id="CP000089">
    <property type="protein sequence ID" value="AAZ46771.1"/>
    <property type="molecule type" value="Genomic_DNA"/>
</dbReference>
<dbReference type="SMR" id="Q47EG0"/>
<dbReference type="STRING" id="159087.Daro_2026"/>
<dbReference type="KEGG" id="dar:Daro_2026"/>
<dbReference type="eggNOG" id="COG0481">
    <property type="taxonomic scope" value="Bacteria"/>
</dbReference>
<dbReference type="HOGENOM" id="CLU_009995_3_3_4"/>
<dbReference type="OrthoDB" id="9801472at2"/>
<dbReference type="GO" id="GO:0005886">
    <property type="term" value="C:plasma membrane"/>
    <property type="evidence" value="ECO:0007669"/>
    <property type="project" value="UniProtKB-SubCell"/>
</dbReference>
<dbReference type="GO" id="GO:0005525">
    <property type="term" value="F:GTP binding"/>
    <property type="evidence" value="ECO:0007669"/>
    <property type="project" value="UniProtKB-UniRule"/>
</dbReference>
<dbReference type="GO" id="GO:0003924">
    <property type="term" value="F:GTPase activity"/>
    <property type="evidence" value="ECO:0007669"/>
    <property type="project" value="UniProtKB-UniRule"/>
</dbReference>
<dbReference type="GO" id="GO:0097216">
    <property type="term" value="F:guanosine tetraphosphate binding"/>
    <property type="evidence" value="ECO:0007669"/>
    <property type="project" value="UniProtKB-ARBA"/>
</dbReference>
<dbReference type="GO" id="GO:0043022">
    <property type="term" value="F:ribosome binding"/>
    <property type="evidence" value="ECO:0007669"/>
    <property type="project" value="UniProtKB-UniRule"/>
</dbReference>
<dbReference type="GO" id="GO:0003746">
    <property type="term" value="F:translation elongation factor activity"/>
    <property type="evidence" value="ECO:0007669"/>
    <property type="project" value="UniProtKB-UniRule"/>
</dbReference>
<dbReference type="GO" id="GO:0045727">
    <property type="term" value="P:positive regulation of translation"/>
    <property type="evidence" value="ECO:0007669"/>
    <property type="project" value="UniProtKB-UniRule"/>
</dbReference>
<dbReference type="CDD" id="cd16260">
    <property type="entry name" value="EF4_III"/>
    <property type="match status" value="1"/>
</dbReference>
<dbReference type="CDD" id="cd01890">
    <property type="entry name" value="LepA"/>
    <property type="match status" value="1"/>
</dbReference>
<dbReference type="CDD" id="cd03709">
    <property type="entry name" value="lepA_C"/>
    <property type="match status" value="1"/>
</dbReference>
<dbReference type="FunFam" id="3.40.50.300:FF:000078">
    <property type="entry name" value="Elongation factor 4"/>
    <property type="match status" value="1"/>
</dbReference>
<dbReference type="FunFam" id="2.40.30.10:FF:000015">
    <property type="entry name" value="Translation factor GUF1, mitochondrial"/>
    <property type="match status" value="1"/>
</dbReference>
<dbReference type="FunFam" id="3.30.70.240:FF:000007">
    <property type="entry name" value="Translation factor GUF1, mitochondrial"/>
    <property type="match status" value="1"/>
</dbReference>
<dbReference type="FunFam" id="3.30.70.2570:FF:000001">
    <property type="entry name" value="Translation factor GUF1, mitochondrial"/>
    <property type="match status" value="1"/>
</dbReference>
<dbReference type="FunFam" id="3.30.70.870:FF:000004">
    <property type="entry name" value="Translation factor GUF1, mitochondrial"/>
    <property type="match status" value="1"/>
</dbReference>
<dbReference type="Gene3D" id="3.30.70.240">
    <property type="match status" value="1"/>
</dbReference>
<dbReference type="Gene3D" id="3.30.70.2570">
    <property type="entry name" value="Elongation factor 4, C-terminal domain"/>
    <property type="match status" value="1"/>
</dbReference>
<dbReference type="Gene3D" id="3.30.70.870">
    <property type="entry name" value="Elongation Factor G (Translational Gtpase), domain 3"/>
    <property type="match status" value="1"/>
</dbReference>
<dbReference type="Gene3D" id="3.40.50.300">
    <property type="entry name" value="P-loop containing nucleotide triphosphate hydrolases"/>
    <property type="match status" value="1"/>
</dbReference>
<dbReference type="Gene3D" id="2.40.30.10">
    <property type="entry name" value="Translation factors"/>
    <property type="match status" value="1"/>
</dbReference>
<dbReference type="HAMAP" id="MF_00071">
    <property type="entry name" value="LepA"/>
    <property type="match status" value="1"/>
</dbReference>
<dbReference type="InterPro" id="IPR006297">
    <property type="entry name" value="EF-4"/>
</dbReference>
<dbReference type="InterPro" id="IPR035647">
    <property type="entry name" value="EFG_III/V"/>
</dbReference>
<dbReference type="InterPro" id="IPR000640">
    <property type="entry name" value="EFG_V-like"/>
</dbReference>
<dbReference type="InterPro" id="IPR004161">
    <property type="entry name" value="EFTu-like_2"/>
</dbReference>
<dbReference type="InterPro" id="IPR031157">
    <property type="entry name" value="G_TR_CS"/>
</dbReference>
<dbReference type="InterPro" id="IPR038363">
    <property type="entry name" value="LepA_C_sf"/>
</dbReference>
<dbReference type="InterPro" id="IPR013842">
    <property type="entry name" value="LepA_CTD"/>
</dbReference>
<dbReference type="InterPro" id="IPR035654">
    <property type="entry name" value="LepA_IV"/>
</dbReference>
<dbReference type="InterPro" id="IPR027417">
    <property type="entry name" value="P-loop_NTPase"/>
</dbReference>
<dbReference type="InterPro" id="IPR005225">
    <property type="entry name" value="Small_GTP-bd"/>
</dbReference>
<dbReference type="InterPro" id="IPR000795">
    <property type="entry name" value="T_Tr_GTP-bd_dom"/>
</dbReference>
<dbReference type="InterPro" id="IPR009000">
    <property type="entry name" value="Transl_B-barrel_sf"/>
</dbReference>
<dbReference type="NCBIfam" id="TIGR01393">
    <property type="entry name" value="lepA"/>
    <property type="match status" value="1"/>
</dbReference>
<dbReference type="NCBIfam" id="TIGR00231">
    <property type="entry name" value="small_GTP"/>
    <property type="match status" value="1"/>
</dbReference>
<dbReference type="PANTHER" id="PTHR43512:SF4">
    <property type="entry name" value="TRANSLATION FACTOR GUF1 HOMOLOG, CHLOROPLASTIC"/>
    <property type="match status" value="1"/>
</dbReference>
<dbReference type="PANTHER" id="PTHR43512">
    <property type="entry name" value="TRANSLATION FACTOR GUF1-RELATED"/>
    <property type="match status" value="1"/>
</dbReference>
<dbReference type="Pfam" id="PF00679">
    <property type="entry name" value="EFG_C"/>
    <property type="match status" value="1"/>
</dbReference>
<dbReference type="Pfam" id="PF00009">
    <property type="entry name" value="GTP_EFTU"/>
    <property type="match status" value="1"/>
</dbReference>
<dbReference type="Pfam" id="PF03144">
    <property type="entry name" value="GTP_EFTU_D2"/>
    <property type="match status" value="1"/>
</dbReference>
<dbReference type="Pfam" id="PF06421">
    <property type="entry name" value="LepA_C"/>
    <property type="match status" value="1"/>
</dbReference>
<dbReference type="PRINTS" id="PR00315">
    <property type="entry name" value="ELONGATNFCT"/>
</dbReference>
<dbReference type="SMART" id="SM00838">
    <property type="entry name" value="EFG_C"/>
    <property type="match status" value="1"/>
</dbReference>
<dbReference type="SUPFAM" id="SSF54980">
    <property type="entry name" value="EF-G C-terminal domain-like"/>
    <property type="match status" value="2"/>
</dbReference>
<dbReference type="SUPFAM" id="SSF52540">
    <property type="entry name" value="P-loop containing nucleoside triphosphate hydrolases"/>
    <property type="match status" value="1"/>
</dbReference>
<dbReference type="SUPFAM" id="SSF50447">
    <property type="entry name" value="Translation proteins"/>
    <property type="match status" value="1"/>
</dbReference>
<dbReference type="PROSITE" id="PS00301">
    <property type="entry name" value="G_TR_1"/>
    <property type="match status" value="1"/>
</dbReference>
<dbReference type="PROSITE" id="PS51722">
    <property type="entry name" value="G_TR_2"/>
    <property type="match status" value="1"/>
</dbReference>